<keyword id="KW-0071">Autoinducer synthesis</keyword>
<keyword id="KW-0408">Iron</keyword>
<keyword id="KW-0456">Lyase</keyword>
<keyword id="KW-0479">Metal-binding</keyword>
<keyword id="KW-0673">Quorum sensing</keyword>
<comment type="function">
    <text evidence="1">Involved in the synthesis of autoinducer 2 (AI-2) which is secreted by bacteria and is used to communicate both the cell density and the metabolic potential of the environment. The regulation of gene expression in response to changes in cell density is called quorum sensing. Catalyzes the transformation of S-ribosylhomocysteine (RHC) to homocysteine (HC) and 4,5-dihydroxy-2,3-pentadione (DPD).</text>
</comment>
<comment type="catalytic activity">
    <reaction evidence="1">
        <text>S-(5-deoxy-D-ribos-5-yl)-L-homocysteine = (S)-4,5-dihydroxypentane-2,3-dione + L-homocysteine</text>
        <dbReference type="Rhea" id="RHEA:17753"/>
        <dbReference type="ChEBI" id="CHEBI:29484"/>
        <dbReference type="ChEBI" id="CHEBI:58195"/>
        <dbReference type="ChEBI" id="CHEBI:58199"/>
        <dbReference type="EC" id="4.4.1.21"/>
    </reaction>
</comment>
<comment type="cofactor">
    <cofactor evidence="1">
        <name>Fe cation</name>
        <dbReference type="ChEBI" id="CHEBI:24875"/>
    </cofactor>
    <text evidence="1">Binds 1 Fe cation per subunit.</text>
</comment>
<comment type="subunit">
    <text evidence="1">Homodimer.</text>
</comment>
<comment type="similarity">
    <text evidence="1">Belongs to the LuxS family.</text>
</comment>
<feature type="chain" id="PRO_1000202673" description="S-ribosylhomocysteine lyase">
    <location>
        <begin position="1"/>
        <end position="171"/>
    </location>
</feature>
<feature type="binding site" evidence="1">
    <location>
        <position position="54"/>
    </location>
    <ligand>
        <name>Fe cation</name>
        <dbReference type="ChEBI" id="CHEBI:24875"/>
    </ligand>
</feature>
<feature type="binding site" evidence="1">
    <location>
        <position position="58"/>
    </location>
    <ligand>
        <name>Fe cation</name>
        <dbReference type="ChEBI" id="CHEBI:24875"/>
    </ligand>
</feature>
<feature type="binding site" evidence="1">
    <location>
        <position position="128"/>
    </location>
    <ligand>
        <name>Fe cation</name>
        <dbReference type="ChEBI" id="CHEBI:24875"/>
    </ligand>
</feature>
<sequence>MPLLDSFTVDHTRMAAPAVRVAKTMKTPHGDNITVFDLRFCRPNIEVMPERGIHTLEHLFAGFMRDHLNGDGVEIIDISPMGCRTGFYMSLIGTPDEQRVADSWKAAMADVLKVTDQRKIPELNEFQCGTYEMHSLKEAQEIAQHIVDSDIGINQNDDLALPKDKLAELHI</sequence>
<accession>C6DCQ4</accession>
<gene>
    <name evidence="1" type="primary">luxS</name>
    <name type="ordered locus">PC1_3206</name>
</gene>
<proteinExistence type="inferred from homology"/>
<dbReference type="EC" id="4.4.1.21" evidence="1"/>
<dbReference type="EMBL" id="CP001657">
    <property type="protein sequence ID" value="ACT14229.1"/>
    <property type="molecule type" value="Genomic_DNA"/>
</dbReference>
<dbReference type="RefSeq" id="WP_015841366.1">
    <property type="nucleotide sequence ID" value="NC_012917.1"/>
</dbReference>
<dbReference type="SMR" id="C6DCQ4"/>
<dbReference type="STRING" id="561230.PC1_3206"/>
<dbReference type="GeneID" id="67792991"/>
<dbReference type="KEGG" id="pct:PC1_3206"/>
<dbReference type="eggNOG" id="COG1854">
    <property type="taxonomic scope" value="Bacteria"/>
</dbReference>
<dbReference type="HOGENOM" id="CLU_107531_2_0_6"/>
<dbReference type="OrthoDB" id="9788129at2"/>
<dbReference type="Proteomes" id="UP000002736">
    <property type="component" value="Chromosome"/>
</dbReference>
<dbReference type="GO" id="GO:0005506">
    <property type="term" value="F:iron ion binding"/>
    <property type="evidence" value="ECO:0007669"/>
    <property type="project" value="InterPro"/>
</dbReference>
<dbReference type="GO" id="GO:0043768">
    <property type="term" value="F:S-ribosylhomocysteine lyase activity"/>
    <property type="evidence" value="ECO:0007669"/>
    <property type="project" value="UniProtKB-UniRule"/>
</dbReference>
<dbReference type="GO" id="GO:0009372">
    <property type="term" value="P:quorum sensing"/>
    <property type="evidence" value="ECO:0007669"/>
    <property type="project" value="UniProtKB-UniRule"/>
</dbReference>
<dbReference type="FunFam" id="3.30.1360.80:FF:000001">
    <property type="entry name" value="S-ribosylhomocysteine lyase"/>
    <property type="match status" value="1"/>
</dbReference>
<dbReference type="Gene3D" id="3.30.1360.80">
    <property type="entry name" value="S-ribosylhomocysteinase (LuxS)"/>
    <property type="match status" value="1"/>
</dbReference>
<dbReference type="HAMAP" id="MF_00091">
    <property type="entry name" value="LuxS"/>
    <property type="match status" value="1"/>
</dbReference>
<dbReference type="InterPro" id="IPR037005">
    <property type="entry name" value="LuxS_sf"/>
</dbReference>
<dbReference type="InterPro" id="IPR011249">
    <property type="entry name" value="Metalloenz_LuxS/M16"/>
</dbReference>
<dbReference type="InterPro" id="IPR003815">
    <property type="entry name" value="S-ribosylhomocysteinase"/>
</dbReference>
<dbReference type="NCBIfam" id="NF002602">
    <property type="entry name" value="PRK02260.1-2"/>
    <property type="match status" value="1"/>
</dbReference>
<dbReference type="PANTHER" id="PTHR35799">
    <property type="entry name" value="S-RIBOSYLHOMOCYSTEINE LYASE"/>
    <property type="match status" value="1"/>
</dbReference>
<dbReference type="PANTHER" id="PTHR35799:SF1">
    <property type="entry name" value="S-RIBOSYLHOMOCYSTEINE LYASE"/>
    <property type="match status" value="1"/>
</dbReference>
<dbReference type="Pfam" id="PF02664">
    <property type="entry name" value="LuxS"/>
    <property type="match status" value="1"/>
</dbReference>
<dbReference type="PIRSF" id="PIRSF006160">
    <property type="entry name" value="AI2"/>
    <property type="match status" value="1"/>
</dbReference>
<dbReference type="PRINTS" id="PR01487">
    <property type="entry name" value="LUXSPROTEIN"/>
</dbReference>
<dbReference type="SUPFAM" id="SSF63411">
    <property type="entry name" value="LuxS/MPP-like metallohydrolase"/>
    <property type="match status" value="1"/>
</dbReference>
<reference key="1">
    <citation type="submission" date="2009-07" db="EMBL/GenBank/DDBJ databases">
        <title>Complete sequence of Pectobacterium carotovorum subsp. carotovorum PC1.</title>
        <authorList>
            <consortium name="US DOE Joint Genome Institute"/>
            <person name="Lucas S."/>
            <person name="Copeland A."/>
            <person name="Lapidus A."/>
            <person name="Glavina del Rio T."/>
            <person name="Tice H."/>
            <person name="Bruce D."/>
            <person name="Goodwin L."/>
            <person name="Pitluck S."/>
            <person name="Munk A.C."/>
            <person name="Brettin T."/>
            <person name="Detter J.C."/>
            <person name="Han C."/>
            <person name="Tapia R."/>
            <person name="Larimer F."/>
            <person name="Land M."/>
            <person name="Hauser L."/>
            <person name="Kyrpides N."/>
            <person name="Mikhailova N."/>
            <person name="Balakrishnan V."/>
            <person name="Glasner J."/>
            <person name="Perna N.T."/>
        </authorList>
    </citation>
    <scope>NUCLEOTIDE SEQUENCE [LARGE SCALE GENOMIC DNA]</scope>
    <source>
        <strain>PC1</strain>
    </source>
</reference>
<protein>
    <recommendedName>
        <fullName evidence="1">S-ribosylhomocysteine lyase</fullName>
        <ecNumber evidence="1">4.4.1.21</ecNumber>
    </recommendedName>
    <alternativeName>
        <fullName evidence="1">AI-2 synthesis protein</fullName>
    </alternativeName>
    <alternativeName>
        <fullName evidence="1">Autoinducer-2 production protein LuxS</fullName>
    </alternativeName>
</protein>
<evidence type="ECO:0000255" key="1">
    <source>
        <dbReference type="HAMAP-Rule" id="MF_00091"/>
    </source>
</evidence>
<organism>
    <name type="scientific">Pectobacterium carotovorum subsp. carotovorum (strain PC1)</name>
    <dbReference type="NCBI Taxonomy" id="561230"/>
    <lineage>
        <taxon>Bacteria</taxon>
        <taxon>Pseudomonadati</taxon>
        <taxon>Pseudomonadota</taxon>
        <taxon>Gammaproteobacteria</taxon>
        <taxon>Enterobacterales</taxon>
        <taxon>Pectobacteriaceae</taxon>
        <taxon>Pectobacterium</taxon>
    </lineage>
</organism>
<name>LUXS_PECCP</name>